<feature type="chain" id="PRO_0000219238" description="Tetraspanin-2">
    <location>
        <begin position="1"/>
        <end position="221"/>
    </location>
</feature>
<feature type="topological domain" description="Cytoplasmic" evidence="1">
    <location>
        <begin position="1"/>
        <end position="13"/>
    </location>
</feature>
<feature type="transmembrane region" description="Helical" evidence="1">
    <location>
        <begin position="14"/>
        <end position="34"/>
    </location>
</feature>
<feature type="topological domain" description="Extracellular" evidence="1">
    <location>
        <begin position="35"/>
        <end position="54"/>
    </location>
</feature>
<feature type="transmembrane region" description="Helical" evidence="1">
    <location>
        <begin position="55"/>
        <end position="75"/>
    </location>
</feature>
<feature type="topological domain" description="Cytoplasmic" evidence="1">
    <location>
        <begin position="76"/>
        <end position="90"/>
    </location>
</feature>
<feature type="transmembrane region" description="Helical" evidence="1">
    <location>
        <begin position="91"/>
        <end position="111"/>
    </location>
</feature>
<feature type="topological domain" description="Extracellular" evidence="1">
    <location>
        <begin position="112"/>
        <end position="188"/>
    </location>
</feature>
<feature type="transmembrane region" description="Helical" evidence="1">
    <location>
        <begin position="189"/>
        <end position="209"/>
    </location>
</feature>
<feature type="topological domain" description="Cytoplasmic" evidence="1">
    <location>
        <begin position="210"/>
        <end position="221"/>
    </location>
</feature>
<feature type="glycosylation site" description="N-linked (GlcNAc...) asparagine" evidence="3">
    <location>
        <position position="139"/>
    </location>
</feature>
<evidence type="ECO:0000255" key="1"/>
<evidence type="ECO:0000305" key="2"/>
<evidence type="ECO:0007744" key="3">
    <source>
    </source>
</evidence>
<dbReference type="EMBL" id="AJ271442">
    <property type="protein sequence ID" value="CAB69827.1"/>
    <property type="molecule type" value="mRNA"/>
</dbReference>
<dbReference type="EMBL" id="BC085733">
    <property type="protein sequence ID" value="AAH85733.1"/>
    <property type="molecule type" value="mRNA"/>
</dbReference>
<dbReference type="RefSeq" id="NP_072111.1">
    <property type="nucleotide sequence ID" value="NM_022589.2"/>
</dbReference>
<dbReference type="SMR" id="Q9JJW1"/>
<dbReference type="FunCoup" id="Q9JJW1">
    <property type="interactions" value="636"/>
</dbReference>
<dbReference type="STRING" id="10116.ENSRNOP00000033076"/>
<dbReference type="GlyCosmos" id="Q9JJW1">
    <property type="glycosylation" value="1 site, 33 glycans"/>
</dbReference>
<dbReference type="GlyGen" id="Q9JJW1">
    <property type="glycosylation" value="1 site, 33 N-linked glycans (1 site)"/>
</dbReference>
<dbReference type="iPTMnet" id="Q9JJW1"/>
<dbReference type="PhosphoSitePlus" id="Q9JJW1"/>
<dbReference type="PaxDb" id="10116-ENSRNOP00000033076"/>
<dbReference type="Ensembl" id="ENSRNOT00000035605.6">
    <property type="protein sequence ID" value="ENSRNOP00000033076.3"/>
    <property type="gene ID" value="ENSRNOG00000023338.6"/>
</dbReference>
<dbReference type="GeneID" id="64521"/>
<dbReference type="KEGG" id="rno:64521"/>
<dbReference type="UCSC" id="RGD:620982">
    <property type="organism name" value="rat"/>
</dbReference>
<dbReference type="AGR" id="RGD:620982"/>
<dbReference type="CTD" id="10100"/>
<dbReference type="RGD" id="620982">
    <property type="gene designation" value="Tspan2"/>
</dbReference>
<dbReference type="eggNOG" id="KOG3882">
    <property type="taxonomic scope" value="Eukaryota"/>
</dbReference>
<dbReference type="GeneTree" id="ENSGT00940000157504"/>
<dbReference type="HOGENOM" id="CLU_055524_10_1_1"/>
<dbReference type="InParanoid" id="Q9JJW1"/>
<dbReference type="OMA" id="VQVKPTC"/>
<dbReference type="OrthoDB" id="5870230at2759"/>
<dbReference type="PhylomeDB" id="Q9JJW1"/>
<dbReference type="TreeFam" id="TF352895"/>
<dbReference type="PRO" id="PR:Q9JJW1"/>
<dbReference type="Proteomes" id="UP000002494">
    <property type="component" value="Chromosome 2"/>
</dbReference>
<dbReference type="Bgee" id="ENSRNOG00000023338">
    <property type="expression patterns" value="Expressed in lung and 20 other cell types or tissues"/>
</dbReference>
<dbReference type="GO" id="GO:0043209">
    <property type="term" value="C:myelin sheath"/>
    <property type="evidence" value="ECO:0000266"/>
    <property type="project" value="RGD"/>
</dbReference>
<dbReference type="GO" id="GO:0005654">
    <property type="term" value="C:nucleoplasm"/>
    <property type="evidence" value="ECO:0007669"/>
    <property type="project" value="Ensembl"/>
</dbReference>
<dbReference type="GO" id="GO:0005886">
    <property type="term" value="C:plasma membrane"/>
    <property type="evidence" value="ECO:0000266"/>
    <property type="project" value="RGD"/>
</dbReference>
<dbReference type="GO" id="GO:0014002">
    <property type="term" value="P:astrocyte development"/>
    <property type="evidence" value="ECO:0000266"/>
    <property type="project" value="RGD"/>
</dbReference>
<dbReference type="GO" id="GO:0061564">
    <property type="term" value="P:axon development"/>
    <property type="evidence" value="ECO:0000266"/>
    <property type="project" value="RGD"/>
</dbReference>
<dbReference type="GO" id="GO:0006954">
    <property type="term" value="P:inflammatory response"/>
    <property type="evidence" value="ECO:0000266"/>
    <property type="project" value="RGD"/>
</dbReference>
<dbReference type="GO" id="GO:0014005">
    <property type="term" value="P:microglia development"/>
    <property type="evidence" value="ECO:0000266"/>
    <property type="project" value="RGD"/>
</dbReference>
<dbReference type="GO" id="GO:0042552">
    <property type="term" value="P:myelination"/>
    <property type="evidence" value="ECO:0000266"/>
    <property type="project" value="RGD"/>
</dbReference>
<dbReference type="GO" id="GO:0048709">
    <property type="term" value="P:oligodendrocyte differentiation"/>
    <property type="evidence" value="ECO:0000266"/>
    <property type="project" value="RGD"/>
</dbReference>
<dbReference type="CDD" id="cd03151">
    <property type="entry name" value="CD81_like_LEL"/>
    <property type="match status" value="1"/>
</dbReference>
<dbReference type="FunFam" id="1.10.1450.10:FF:000015">
    <property type="entry name" value="Tetraspanin"/>
    <property type="match status" value="1"/>
</dbReference>
<dbReference type="Gene3D" id="1.10.1450.10">
    <property type="entry name" value="Tetraspanin"/>
    <property type="match status" value="1"/>
</dbReference>
<dbReference type="InterPro" id="IPR018499">
    <property type="entry name" value="Tetraspanin/Peripherin"/>
</dbReference>
<dbReference type="InterPro" id="IPR000301">
    <property type="entry name" value="Tetraspanin_animals"/>
</dbReference>
<dbReference type="InterPro" id="IPR018503">
    <property type="entry name" value="Tetraspanin_CS"/>
</dbReference>
<dbReference type="InterPro" id="IPR008952">
    <property type="entry name" value="Tetraspanin_EC2_sf"/>
</dbReference>
<dbReference type="PANTHER" id="PTHR19282">
    <property type="entry name" value="TETRASPANIN"/>
    <property type="match status" value="1"/>
</dbReference>
<dbReference type="PANTHER" id="PTHR19282:SF155">
    <property type="entry name" value="TETRASPANIN-2"/>
    <property type="match status" value="1"/>
</dbReference>
<dbReference type="Pfam" id="PF00335">
    <property type="entry name" value="Tetraspanin"/>
    <property type="match status" value="1"/>
</dbReference>
<dbReference type="PIRSF" id="PIRSF002419">
    <property type="entry name" value="Tetraspanin"/>
    <property type="match status" value="1"/>
</dbReference>
<dbReference type="PRINTS" id="PR00259">
    <property type="entry name" value="TMFOUR"/>
</dbReference>
<dbReference type="SUPFAM" id="SSF48652">
    <property type="entry name" value="Tetraspanin"/>
    <property type="match status" value="1"/>
</dbReference>
<dbReference type="PROSITE" id="PS00421">
    <property type="entry name" value="TM4_1"/>
    <property type="match status" value="1"/>
</dbReference>
<proteinExistence type="evidence at protein level"/>
<reference key="1">
    <citation type="journal article" date="1999" name="J. Neurochem.">
        <title>A novel rat tetraspan protein in cells of the oligodendrocyte lineage.</title>
        <authorList>
            <person name="Birling M.C."/>
            <person name="Tait S."/>
            <person name="Hardy R.J."/>
            <person name="Brophy P.J."/>
        </authorList>
    </citation>
    <scope>NUCLEOTIDE SEQUENCE [MRNA]</scope>
</reference>
<reference key="2">
    <citation type="journal article" date="2004" name="Genome Res.">
        <title>The status, quality, and expansion of the NIH full-length cDNA project: the Mammalian Gene Collection (MGC).</title>
        <authorList>
            <consortium name="The MGC Project Team"/>
        </authorList>
    </citation>
    <scope>NUCLEOTIDE SEQUENCE [LARGE SCALE MRNA]</scope>
    <source>
        <tissue>Lung</tissue>
    </source>
</reference>
<reference key="3">
    <citation type="submission" date="2007-09" db="UniProtKB">
        <authorList>
            <person name="Lubec G."/>
            <person name="Kang S.U."/>
            <person name="Lubec S."/>
        </authorList>
    </citation>
    <scope>PROTEIN SEQUENCE OF 119-133; 155-166 AND 178-185</scope>
    <scope>IDENTIFICATION BY MASS SPECTROMETRY</scope>
    <source>
        <strain>Sprague-Dawley</strain>
        <tissue>Brain</tissue>
    </source>
</reference>
<reference key="4">
    <citation type="journal article" date="2013" name="J. Proteome Res.">
        <title>Site-specific glycan-peptide analysis for determination of N-glycoproteome heterogeneity.</title>
        <authorList>
            <person name="Parker B.L."/>
            <person name="Thaysen-Andersen M."/>
            <person name="Solis N."/>
            <person name="Scott N.E."/>
            <person name="Larsen M.R."/>
            <person name="Graham M.E."/>
            <person name="Packer N.H."/>
            <person name="Cordwell S.J."/>
        </authorList>
    </citation>
    <scope>GLYCOSYLATION [LARGE SCALE ANALYSIS] AT ASN-139</scope>
    <scope>IDENTIFICATION BY MASS SPECTROMETRY [LARGE SCALE ANALYSIS]</scope>
    <source>
        <tissue>Brain</tissue>
    </source>
</reference>
<keyword id="KW-0903">Direct protein sequencing</keyword>
<keyword id="KW-0325">Glycoprotein</keyword>
<keyword id="KW-0472">Membrane</keyword>
<keyword id="KW-1185">Reference proteome</keyword>
<keyword id="KW-0812">Transmembrane</keyword>
<keyword id="KW-1133">Transmembrane helix</keyword>
<protein>
    <recommendedName>
        <fullName>Tetraspanin-2</fullName>
        <shortName>Tspan-2</shortName>
    </recommendedName>
</protein>
<sequence>MGRFRGGLRCIKYLLLGFNLLFWLAGSAVIAFGLWFRFGGTIKDLSSEEKSPEYFYVGLYVLVGAGALMMAVGFFGCCGAMRESQCVLGSFFTCLLVIFAAEVTTGVFAFIGKDVAIRHVQSMYEEAYSDYVRDRGRGNGTLITFHSAFQCCGKESSEQVQPTCPKELPGHKNCIDKIETIISVKLQLIGIVGIGIAGLTIFGMIFSMVLCCAIRNSRDVI</sequence>
<gene>
    <name type="primary">Tspan2</name>
</gene>
<organism>
    <name type="scientific">Rattus norvegicus</name>
    <name type="common">Rat</name>
    <dbReference type="NCBI Taxonomy" id="10116"/>
    <lineage>
        <taxon>Eukaryota</taxon>
        <taxon>Metazoa</taxon>
        <taxon>Chordata</taxon>
        <taxon>Craniata</taxon>
        <taxon>Vertebrata</taxon>
        <taxon>Euteleostomi</taxon>
        <taxon>Mammalia</taxon>
        <taxon>Eutheria</taxon>
        <taxon>Euarchontoglires</taxon>
        <taxon>Glires</taxon>
        <taxon>Rodentia</taxon>
        <taxon>Myomorpha</taxon>
        <taxon>Muroidea</taxon>
        <taxon>Muridae</taxon>
        <taxon>Murinae</taxon>
        <taxon>Rattus</taxon>
    </lineage>
</organism>
<accession>Q9JJW1</accession>
<comment type="function">
    <text>May play a role in signalling in oligodendrocytes in the early stages of their terminal differentiation into myelin-forming glia and may also function in stabilizing the mature sheath.</text>
</comment>
<comment type="subcellular location">
    <subcellularLocation>
        <location evidence="2">Membrane</location>
        <topology evidence="2">Multi-pass membrane protein</topology>
    </subcellularLocation>
</comment>
<comment type="tissue specificity">
    <text>Expression is restricted to the nervous system.</text>
</comment>
<comment type="similarity">
    <text evidence="2">Belongs to the tetraspanin (TM4SF) family.</text>
</comment>
<name>TSN2_RAT</name>